<gene>
    <name type="primary">dsbC</name>
    <name type="ordered locus">STM3043</name>
</gene>
<evidence type="ECO:0000250" key="1"/>
<evidence type="ECO:0000255" key="2"/>
<evidence type="ECO:0000305" key="3"/>
<evidence type="ECO:0007829" key="4">
    <source>
        <dbReference type="PDB" id="4I5Q"/>
    </source>
</evidence>
<dbReference type="EMBL" id="AE006468">
    <property type="protein sequence ID" value="AAL21918.1"/>
    <property type="molecule type" value="Genomic_DNA"/>
</dbReference>
<dbReference type="EMBL" id="U92524">
    <property type="protein sequence ID" value="AAC45775.1"/>
    <property type="molecule type" value="Genomic_DNA"/>
</dbReference>
<dbReference type="RefSeq" id="NP_461959.1">
    <property type="nucleotide sequence ID" value="NC_003197.2"/>
</dbReference>
<dbReference type="RefSeq" id="WP_000745625.1">
    <property type="nucleotide sequence ID" value="NC_003197.2"/>
</dbReference>
<dbReference type="PDB" id="4I5Q">
    <property type="method" value="X-ray"/>
    <property type="resolution" value="1.96 A"/>
    <property type="chains" value="A/B=23-237"/>
</dbReference>
<dbReference type="PDB" id="4ILF">
    <property type="method" value="X-ray"/>
    <property type="resolution" value="2.00 A"/>
    <property type="chains" value="A/B=23-237"/>
</dbReference>
<dbReference type="PDBsum" id="4I5Q"/>
<dbReference type="PDBsum" id="4ILF"/>
<dbReference type="SMR" id="P55890"/>
<dbReference type="STRING" id="99287.STM3043"/>
<dbReference type="PaxDb" id="99287-STM3043"/>
<dbReference type="GeneID" id="1254566"/>
<dbReference type="KEGG" id="stm:STM3043"/>
<dbReference type="PATRIC" id="fig|99287.12.peg.3223"/>
<dbReference type="HOGENOM" id="CLU_083593_0_0_6"/>
<dbReference type="OMA" id="QMIVYKA"/>
<dbReference type="PhylomeDB" id="P55890"/>
<dbReference type="BioCyc" id="SENT99287:STM3043-MONOMER"/>
<dbReference type="EvolutionaryTrace" id="P55890"/>
<dbReference type="Proteomes" id="UP000001014">
    <property type="component" value="Chromosome"/>
</dbReference>
<dbReference type="GO" id="GO:0042597">
    <property type="term" value="C:periplasmic space"/>
    <property type="evidence" value="ECO:0007669"/>
    <property type="project" value="UniProtKB-SubCell"/>
</dbReference>
<dbReference type="CDD" id="cd03020">
    <property type="entry name" value="DsbA_DsbC_DsbG"/>
    <property type="match status" value="1"/>
</dbReference>
<dbReference type="FunFam" id="3.40.30.10:FF:000083">
    <property type="entry name" value="Thiol:disulfide interchange protein"/>
    <property type="match status" value="1"/>
</dbReference>
<dbReference type="Gene3D" id="3.10.450.70">
    <property type="entry name" value="Disulphide bond isomerase, DsbC/G, N-terminal"/>
    <property type="match status" value="1"/>
</dbReference>
<dbReference type="Gene3D" id="3.40.30.10">
    <property type="entry name" value="Glutaredoxin"/>
    <property type="match status" value="1"/>
</dbReference>
<dbReference type="InterPro" id="IPR033954">
    <property type="entry name" value="DiS-bond_Isoase_DsbC/G"/>
</dbReference>
<dbReference type="InterPro" id="IPR018950">
    <property type="entry name" value="DiS-bond_isomerase_DsbC/G_N"/>
</dbReference>
<dbReference type="InterPro" id="IPR009094">
    <property type="entry name" value="DiS-bond_isomerase_DsbC/G_N_sf"/>
</dbReference>
<dbReference type="InterPro" id="IPR051470">
    <property type="entry name" value="Thiol:disulfide_interchange"/>
</dbReference>
<dbReference type="InterPro" id="IPR012336">
    <property type="entry name" value="Thioredoxin-like_fold"/>
</dbReference>
<dbReference type="InterPro" id="IPR036249">
    <property type="entry name" value="Thioredoxin-like_sf"/>
</dbReference>
<dbReference type="InterPro" id="IPR017937">
    <property type="entry name" value="Thioredoxin_CS"/>
</dbReference>
<dbReference type="NCBIfam" id="NF008129">
    <property type="entry name" value="PRK10877.1"/>
    <property type="match status" value="1"/>
</dbReference>
<dbReference type="PANTHER" id="PTHR35272:SF3">
    <property type="entry name" value="THIOL:DISULFIDE INTERCHANGE PROTEIN DSBC"/>
    <property type="match status" value="1"/>
</dbReference>
<dbReference type="PANTHER" id="PTHR35272">
    <property type="entry name" value="THIOL:DISULFIDE INTERCHANGE PROTEIN DSBC-RELATED"/>
    <property type="match status" value="1"/>
</dbReference>
<dbReference type="Pfam" id="PF10411">
    <property type="entry name" value="DsbC_N"/>
    <property type="match status" value="1"/>
</dbReference>
<dbReference type="Pfam" id="PF13098">
    <property type="entry name" value="Thioredoxin_2"/>
    <property type="match status" value="1"/>
</dbReference>
<dbReference type="SUPFAM" id="SSF54423">
    <property type="entry name" value="DsbC/DsbG N-terminal domain-like"/>
    <property type="match status" value="1"/>
</dbReference>
<dbReference type="SUPFAM" id="SSF52833">
    <property type="entry name" value="Thioredoxin-like"/>
    <property type="match status" value="1"/>
</dbReference>
<dbReference type="PROSITE" id="PS00194">
    <property type="entry name" value="THIOREDOXIN_1"/>
    <property type="match status" value="1"/>
</dbReference>
<proteinExistence type="evidence at protein level"/>
<feature type="signal peptide" evidence="1">
    <location>
        <begin position="1"/>
        <end position="21"/>
    </location>
</feature>
<feature type="chain" id="PRO_0000034274" description="Thiol:disulfide interchange protein DsbC">
    <location>
        <begin position="22"/>
        <end position="237"/>
    </location>
</feature>
<feature type="disulfide bond" description="Redox-active" evidence="2">
    <location>
        <begin position="119"/>
        <end position="122"/>
    </location>
</feature>
<feature type="sequence conflict" description="In Ref. 2; AAC45775." evidence="3" ref="2">
    <original>P</original>
    <variation>A</variation>
    <location>
        <position position="44"/>
    </location>
</feature>
<feature type="sequence conflict" description="In Ref. 2; AAC45775." evidence="3" ref="2">
    <original>N</original>
    <variation>K</variation>
    <location>
        <position position="93"/>
    </location>
</feature>
<feature type="helix" evidence="4">
    <location>
        <begin position="23"/>
        <end position="32"/>
    </location>
</feature>
<feature type="strand" evidence="4">
    <location>
        <begin position="39"/>
        <end position="42"/>
    </location>
</feature>
<feature type="strand" evidence="4">
    <location>
        <begin position="48"/>
        <end position="53"/>
    </location>
</feature>
<feature type="strand" evidence="4">
    <location>
        <begin position="56"/>
        <end position="61"/>
    </location>
</feature>
<feature type="strand" evidence="4">
    <location>
        <begin position="66"/>
        <end position="70"/>
    </location>
</feature>
<feature type="strand" evidence="4">
    <location>
        <begin position="72"/>
        <end position="74"/>
    </location>
</feature>
<feature type="strand" evidence="4">
    <location>
        <begin position="76"/>
        <end position="79"/>
    </location>
</feature>
<feature type="helix" evidence="4">
    <location>
        <begin position="83"/>
        <end position="93"/>
    </location>
</feature>
<feature type="helix" evidence="4">
    <location>
        <begin position="94"/>
        <end position="98"/>
    </location>
</feature>
<feature type="strand" evidence="4">
    <location>
        <begin position="99"/>
        <end position="102"/>
    </location>
</feature>
<feature type="strand" evidence="4">
    <location>
        <begin position="108"/>
        <end position="115"/>
    </location>
</feature>
<feature type="helix" evidence="4">
    <location>
        <begin position="120"/>
        <end position="127"/>
    </location>
</feature>
<feature type="helix" evidence="4">
    <location>
        <begin position="129"/>
        <end position="134"/>
    </location>
</feature>
<feature type="strand" evidence="4">
    <location>
        <begin position="137"/>
        <end position="143"/>
    </location>
</feature>
<feature type="strand" evidence="4">
    <location>
        <begin position="149"/>
        <end position="151"/>
    </location>
</feature>
<feature type="helix" evidence="4">
    <location>
        <begin position="152"/>
        <end position="161"/>
    </location>
</feature>
<feature type="strand" evidence="4">
    <location>
        <begin position="163"/>
        <end position="165"/>
    </location>
</feature>
<feature type="helix" evidence="4">
    <location>
        <begin position="166"/>
        <end position="175"/>
    </location>
</feature>
<feature type="helix" evidence="4">
    <location>
        <begin position="188"/>
        <end position="198"/>
    </location>
</feature>
<feature type="strand" evidence="4">
    <location>
        <begin position="202"/>
        <end position="207"/>
    </location>
</feature>
<feature type="helix" evidence="4">
    <location>
        <begin position="220"/>
        <end position="232"/>
    </location>
</feature>
<protein>
    <recommendedName>
        <fullName>Thiol:disulfide interchange protein DsbC</fullName>
    </recommendedName>
</protein>
<organism>
    <name type="scientific">Salmonella typhimurium (strain LT2 / SGSC1412 / ATCC 700720)</name>
    <dbReference type="NCBI Taxonomy" id="99287"/>
    <lineage>
        <taxon>Bacteria</taxon>
        <taxon>Pseudomonadati</taxon>
        <taxon>Pseudomonadota</taxon>
        <taxon>Gammaproteobacteria</taxon>
        <taxon>Enterobacterales</taxon>
        <taxon>Enterobacteriaceae</taxon>
        <taxon>Salmonella</taxon>
    </lineage>
</organism>
<comment type="function">
    <text>Required for disulfide bond formation in some periplasmic proteins. Acts by transferring its disulfide bond to other proteins and is reduced in the process. DsbC is reoxidized by a yet uncharacterized protein. Also acts as a disulfide isomerase.</text>
</comment>
<comment type="subunit">
    <text evidence="1">Homodimer.</text>
</comment>
<comment type="subcellular location">
    <subcellularLocation>
        <location>Periplasm</location>
    </subcellularLocation>
</comment>
<comment type="similarity">
    <text evidence="3">Belongs to the thioredoxin family. DsbC subfamily.</text>
</comment>
<keyword id="KW-0002">3D-structure</keyword>
<keyword id="KW-1015">Disulfide bond</keyword>
<keyword id="KW-0574">Periplasm</keyword>
<keyword id="KW-0676">Redox-active center</keyword>
<keyword id="KW-1185">Reference proteome</keyword>
<keyword id="KW-0732">Signal</keyword>
<accession>P55890</accession>
<reference key="1">
    <citation type="journal article" date="2001" name="Nature">
        <title>Complete genome sequence of Salmonella enterica serovar Typhimurium LT2.</title>
        <authorList>
            <person name="McClelland M."/>
            <person name="Sanderson K.E."/>
            <person name="Spieth J."/>
            <person name="Clifton S.W."/>
            <person name="Latreille P."/>
            <person name="Courtney L."/>
            <person name="Porwollik S."/>
            <person name="Ali J."/>
            <person name="Dante M."/>
            <person name="Du F."/>
            <person name="Hou S."/>
            <person name="Layman D."/>
            <person name="Leonard S."/>
            <person name="Nguyen C."/>
            <person name="Scott K."/>
            <person name="Holmes A."/>
            <person name="Grewal N."/>
            <person name="Mulvaney E."/>
            <person name="Ryan E."/>
            <person name="Sun H."/>
            <person name="Florea L."/>
            <person name="Miller W."/>
            <person name="Stoneking T."/>
            <person name="Nhan M."/>
            <person name="Waterston R."/>
            <person name="Wilson R.K."/>
        </authorList>
    </citation>
    <scope>NUCLEOTIDE SEQUENCE [LARGE SCALE GENOMIC DNA]</scope>
    <source>
        <strain>LT2 / SGSC1412 / ATCC 700720</strain>
    </source>
</reference>
<reference key="2">
    <citation type="journal article" date="1997" name="Gene">
        <title>Salmonella typhimurium specifies a circular chromosome dimer resolution system which is homologous to the Xer site-specific recombination system of Escherichia coli.</title>
        <authorList>
            <person name="Hayes F."/>
            <person name="Lubetzki S.A."/>
            <person name="Sherratt D.J."/>
        </authorList>
    </citation>
    <scope>NUCLEOTIDE SEQUENCE [GENOMIC DNA] OF 1-174</scope>
    <source>
        <strain>LT2</strain>
    </source>
</reference>
<sequence>MKKRFMMFTLLAAVFSGVAHADDAAIRQSLAKLGVQSTEIQASPVAGMKTVLTHSGVLYVTDDGKHIIQGPMYDVSGAHPVNVTNKLLMSQLNALEKEMIVYKAPDEKHVITVFTDITCGYCHKLHEEMKDYNALGITVRYLAFPRQGLESQAEQDMKSIWCAKDKNKAFDDAMAGKGVKPASCDVNIADHYALGVQLGVSGTPAIVLSNGYVVPGYQGPKEMKAFLDEHQKQTSGK</sequence>
<name>DSBC_SALTY</name>